<accession>Q5JH34</accession>
<keyword id="KW-1185">Reference proteome</keyword>
<keyword id="KW-0687">Ribonucleoprotein</keyword>
<keyword id="KW-0689">Ribosomal protein</keyword>
<keyword id="KW-0694">RNA-binding</keyword>
<keyword id="KW-0699">rRNA-binding</keyword>
<protein>
    <recommendedName>
        <fullName evidence="1">Large ribosomal subunit protein uL11</fullName>
    </recommendedName>
    <alternativeName>
        <fullName evidence="2">50S ribosomal protein L11</fullName>
    </alternativeName>
</protein>
<gene>
    <name evidence="1" type="primary">rpl11</name>
    <name type="ordered locus">TK1418</name>
</gene>
<sequence length="165" mass="17605">MAQVVEVLVEGGKASPGPPLGPAIGPLGLNVKQVVDEINKATKEFEGMQVPVKIIVEDPKKKTFRIEVGIPPTSQLIKKELGIPKGSSEAGHTPAGNLTMEQVIKIAKMKIDQMLAPNLKAAAKEVIGTALSMGVTVEGKDPREVQREIDEGVYDELFAKAEEAQ</sequence>
<dbReference type="EMBL" id="AP006878">
    <property type="protein sequence ID" value="BAD85607.1"/>
    <property type="molecule type" value="Genomic_DNA"/>
</dbReference>
<dbReference type="RefSeq" id="WP_011250369.1">
    <property type="nucleotide sequence ID" value="NC_006624.1"/>
</dbReference>
<dbReference type="SMR" id="Q5JH34"/>
<dbReference type="FunCoup" id="Q5JH34">
    <property type="interactions" value="153"/>
</dbReference>
<dbReference type="STRING" id="69014.TK1418"/>
<dbReference type="EnsemblBacteria" id="BAD85607">
    <property type="protein sequence ID" value="BAD85607"/>
    <property type="gene ID" value="TK1418"/>
</dbReference>
<dbReference type="GeneID" id="78447939"/>
<dbReference type="KEGG" id="tko:TK1418"/>
<dbReference type="PATRIC" id="fig|69014.16.peg.1380"/>
<dbReference type="eggNOG" id="arCOG04372">
    <property type="taxonomic scope" value="Archaea"/>
</dbReference>
<dbReference type="HOGENOM" id="CLU_074237_4_0_2"/>
<dbReference type="InParanoid" id="Q5JH34"/>
<dbReference type="OrthoDB" id="8842at2157"/>
<dbReference type="PhylomeDB" id="Q5JH34"/>
<dbReference type="Proteomes" id="UP000000536">
    <property type="component" value="Chromosome"/>
</dbReference>
<dbReference type="GO" id="GO:0015934">
    <property type="term" value="C:large ribosomal subunit"/>
    <property type="evidence" value="ECO:0000318"/>
    <property type="project" value="GO_Central"/>
</dbReference>
<dbReference type="GO" id="GO:0070180">
    <property type="term" value="F:large ribosomal subunit rRNA binding"/>
    <property type="evidence" value="ECO:0000318"/>
    <property type="project" value="GO_Central"/>
</dbReference>
<dbReference type="GO" id="GO:0003735">
    <property type="term" value="F:structural constituent of ribosome"/>
    <property type="evidence" value="ECO:0000318"/>
    <property type="project" value="GO_Central"/>
</dbReference>
<dbReference type="GO" id="GO:0006412">
    <property type="term" value="P:translation"/>
    <property type="evidence" value="ECO:0000318"/>
    <property type="project" value="GO_Central"/>
</dbReference>
<dbReference type="CDD" id="cd00349">
    <property type="entry name" value="Ribosomal_L11"/>
    <property type="match status" value="1"/>
</dbReference>
<dbReference type="FunFam" id="1.10.10.250:FF:000006">
    <property type="entry name" value="50S ribosomal protein L11"/>
    <property type="match status" value="1"/>
</dbReference>
<dbReference type="FunFam" id="3.30.1550.10:FF:000007">
    <property type="entry name" value="50S ribosomal protein L11"/>
    <property type="match status" value="1"/>
</dbReference>
<dbReference type="Gene3D" id="1.10.10.250">
    <property type="entry name" value="Ribosomal protein L11, C-terminal domain"/>
    <property type="match status" value="1"/>
</dbReference>
<dbReference type="Gene3D" id="3.30.1550.10">
    <property type="entry name" value="Ribosomal protein L11/L12, N-terminal domain"/>
    <property type="match status" value="1"/>
</dbReference>
<dbReference type="HAMAP" id="MF_00736">
    <property type="entry name" value="Ribosomal_uL11"/>
    <property type="match status" value="1"/>
</dbReference>
<dbReference type="InterPro" id="IPR000911">
    <property type="entry name" value="Ribosomal_uL11"/>
</dbReference>
<dbReference type="InterPro" id="IPR020783">
    <property type="entry name" value="Ribosomal_uL11_C"/>
</dbReference>
<dbReference type="InterPro" id="IPR036769">
    <property type="entry name" value="Ribosomal_uL11_C_sf"/>
</dbReference>
<dbReference type="InterPro" id="IPR020785">
    <property type="entry name" value="Ribosomal_uL11_CS"/>
</dbReference>
<dbReference type="InterPro" id="IPR020784">
    <property type="entry name" value="Ribosomal_uL11_N"/>
</dbReference>
<dbReference type="InterPro" id="IPR036796">
    <property type="entry name" value="Ribosomal_uL11_N_sf"/>
</dbReference>
<dbReference type="NCBIfam" id="NF002232">
    <property type="entry name" value="PRK01143.1"/>
    <property type="match status" value="1"/>
</dbReference>
<dbReference type="PANTHER" id="PTHR11661">
    <property type="entry name" value="60S RIBOSOMAL PROTEIN L12"/>
    <property type="match status" value="1"/>
</dbReference>
<dbReference type="PANTHER" id="PTHR11661:SF1">
    <property type="entry name" value="LARGE RIBOSOMAL SUBUNIT PROTEIN UL11M"/>
    <property type="match status" value="1"/>
</dbReference>
<dbReference type="Pfam" id="PF00298">
    <property type="entry name" value="Ribosomal_L11"/>
    <property type="match status" value="1"/>
</dbReference>
<dbReference type="Pfam" id="PF03946">
    <property type="entry name" value="Ribosomal_L11_N"/>
    <property type="match status" value="1"/>
</dbReference>
<dbReference type="SMART" id="SM00649">
    <property type="entry name" value="RL11"/>
    <property type="match status" value="1"/>
</dbReference>
<dbReference type="SUPFAM" id="SSF54747">
    <property type="entry name" value="Ribosomal L11/L12e N-terminal domain"/>
    <property type="match status" value="1"/>
</dbReference>
<dbReference type="SUPFAM" id="SSF46906">
    <property type="entry name" value="Ribosomal protein L11, C-terminal domain"/>
    <property type="match status" value="1"/>
</dbReference>
<dbReference type="PROSITE" id="PS00359">
    <property type="entry name" value="RIBOSOMAL_L11"/>
    <property type="match status" value="1"/>
</dbReference>
<organism>
    <name type="scientific">Thermococcus kodakarensis (strain ATCC BAA-918 / JCM 12380 / KOD1)</name>
    <name type="common">Pyrococcus kodakaraensis (strain KOD1)</name>
    <dbReference type="NCBI Taxonomy" id="69014"/>
    <lineage>
        <taxon>Archaea</taxon>
        <taxon>Methanobacteriati</taxon>
        <taxon>Methanobacteriota</taxon>
        <taxon>Thermococci</taxon>
        <taxon>Thermococcales</taxon>
        <taxon>Thermococcaceae</taxon>
        <taxon>Thermococcus</taxon>
    </lineage>
</organism>
<comment type="function">
    <text evidence="1">Forms part of the ribosomal stalk which helps the ribosome interact with GTP-bound translation factors.</text>
</comment>
<comment type="subunit">
    <text evidence="1">Part of the ribosomal stalk of the 50S ribosomal subunit. Interacts with L10 and the large rRNA to form the base of the stalk. L10 forms an elongated spine to which L12 dimers bind in a sequential fashion forming a multimeric L10(L12)X complex.</text>
</comment>
<comment type="similarity">
    <text evidence="1">Belongs to the universal ribosomal protein uL11 family.</text>
</comment>
<evidence type="ECO:0000255" key="1">
    <source>
        <dbReference type="HAMAP-Rule" id="MF_00736"/>
    </source>
</evidence>
<evidence type="ECO:0000305" key="2"/>
<proteinExistence type="inferred from homology"/>
<feature type="chain" id="PRO_0000104446" description="Large ribosomal subunit protein uL11">
    <location>
        <begin position="1"/>
        <end position="165"/>
    </location>
</feature>
<reference key="1">
    <citation type="journal article" date="2005" name="Genome Res.">
        <title>Complete genome sequence of the hyperthermophilic archaeon Thermococcus kodakaraensis KOD1 and comparison with Pyrococcus genomes.</title>
        <authorList>
            <person name="Fukui T."/>
            <person name="Atomi H."/>
            <person name="Kanai T."/>
            <person name="Matsumi R."/>
            <person name="Fujiwara S."/>
            <person name="Imanaka T."/>
        </authorList>
    </citation>
    <scope>NUCLEOTIDE SEQUENCE [LARGE SCALE GENOMIC DNA]</scope>
    <source>
        <strain>ATCC BAA-918 / JCM 12380 / KOD1</strain>
    </source>
</reference>
<name>RL11_THEKO</name>